<feature type="chain" id="PRO_1000004148" description="Large ribosomal subunit protein bL33">
    <location>
        <begin position="1"/>
        <end position="55"/>
    </location>
</feature>
<comment type="similarity">
    <text evidence="1">Belongs to the bacterial ribosomal protein bL33 family.</text>
</comment>
<name>RL33_BAUCH</name>
<gene>
    <name evidence="1" type="primary">rpmG</name>
    <name type="ordered locus">BCI_0178</name>
</gene>
<evidence type="ECO:0000255" key="1">
    <source>
        <dbReference type="HAMAP-Rule" id="MF_00294"/>
    </source>
</evidence>
<evidence type="ECO:0000305" key="2"/>
<sequence>MAKGVREKIKLVSSAGTHHFYTTTKNKRLKLEKLELKKFDPVVRKHVIYKEAKIK</sequence>
<keyword id="KW-1185">Reference proteome</keyword>
<keyword id="KW-0687">Ribonucleoprotein</keyword>
<keyword id="KW-0689">Ribosomal protein</keyword>
<reference key="1">
    <citation type="journal article" date="2006" name="PLoS Biol.">
        <title>Metabolic complementarity and genomics of the dual bacterial symbiosis of sharpshooters.</title>
        <authorList>
            <person name="Wu D."/>
            <person name="Daugherty S.C."/>
            <person name="Van Aken S.E."/>
            <person name="Pai G.H."/>
            <person name="Watkins K.L."/>
            <person name="Khouri H."/>
            <person name="Tallon L.J."/>
            <person name="Zaborsky J.M."/>
            <person name="Dunbar H.E."/>
            <person name="Tran P.L."/>
            <person name="Moran N.A."/>
            <person name="Eisen J.A."/>
        </authorList>
    </citation>
    <scope>NUCLEOTIDE SEQUENCE [LARGE SCALE GENOMIC DNA]</scope>
</reference>
<organism>
    <name type="scientific">Baumannia cicadellinicola subsp. Homalodisca coagulata</name>
    <dbReference type="NCBI Taxonomy" id="374463"/>
    <lineage>
        <taxon>Bacteria</taxon>
        <taxon>Pseudomonadati</taxon>
        <taxon>Pseudomonadota</taxon>
        <taxon>Gammaproteobacteria</taxon>
        <taxon>Candidatus Palibaumannia</taxon>
    </lineage>
</organism>
<accession>Q1LTS5</accession>
<proteinExistence type="inferred from homology"/>
<dbReference type="EMBL" id="CP000238">
    <property type="protein sequence ID" value="ABF14351.1"/>
    <property type="molecule type" value="Genomic_DNA"/>
</dbReference>
<dbReference type="RefSeq" id="WP_011520372.1">
    <property type="nucleotide sequence ID" value="NC_007984.1"/>
</dbReference>
<dbReference type="SMR" id="Q1LTS5"/>
<dbReference type="STRING" id="374463.BCI_0178"/>
<dbReference type="KEGG" id="bci:BCI_0178"/>
<dbReference type="HOGENOM" id="CLU_190949_1_1_6"/>
<dbReference type="Proteomes" id="UP000002427">
    <property type="component" value="Chromosome"/>
</dbReference>
<dbReference type="GO" id="GO:0022625">
    <property type="term" value="C:cytosolic large ribosomal subunit"/>
    <property type="evidence" value="ECO:0007669"/>
    <property type="project" value="TreeGrafter"/>
</dbReference>
<dbReference type="GO" id="GO:0003735">
    <property type="term" value="F:structural constituent of ribosome"/>
    <property type="evidence" value="ECO:0007669"/>
    <property type="project" value="InterPro"/>
</dbReference>
<dbReference type="GO" id="GO:0006412">
    <property type="term" value="P:translation"/>
    <property type="evidence" value="ECO:0007669"/>
    <property type="project" value="UniProtKB-UniRule"/>
</dbReference>
<dbReference type="FunFam" id="2.20.28.120:FF:000001">
    <property type="entry name" value="50S ribosomal protein L33"/>
    <property type="match status" value="1"/>
</dbReference>
<dbReference type="Gene3D" id="2.20.28.120">
    <property type="entry name" value="Ribosomal protein L33"/>
    <property type="match status" value="1"/>
</dbReference>
<dbReference type="HAMAP" id="MF_00294">
    <property type="entry name" value="Ribosomal_bL33"/>
    <property type="match status" value="1"/>
</dbReference>
<dbReference type="InterPro" id="IPR001705">
    <property type="entry name" value="Ribosomal_bL33"/>
</dbReference>
<dbReference type="InterPro" id="IPR038584">
    <property type="entry name" value="Ribosomal_bL33_sf"/>
</dbReference>
<dbReference type="InterPro" id="IPR011332">
    <property type="entry name" value="Ribosomal_zn-bd"/>
</dbReference>
<dbReference type="NCBIfam" id="NF001860">
    <property type="entry name" value="PRK00595.1"/>
    <property type="match status" value="1"/>
</dbReference>
<dbReference type="NCBIfam" id="TIGR01023">
    <property type="entry name" value="rpmG_bact"/>
    <property type="match status" value="1"/>
</dbReference>
<dbReference type="PANTHER" id="PTHR15238">
    <property type="entry name" value="54S RIBOSOMAL PROTEIN L39, MITOCHONDRIAL"/>
    <property type="match status" value="1"/>
</dbReference>
<dbReference type="PANTHER" id="PTHR15238:SF1">
    <property type="entry name" value="LARGE RIBOSOMAL SUBUNIT PROTEIN BL33M"/>
    <property type="match status" value="1"/>
</dbReference>
<dbReference type="Pfam" id="PF00471">
    <property type="entry name" value="Ribosomal_L33"/>
    <property type="match status" value="1"/>
</dbReference>
<dbReference type="SUPFAM" id="SSF57829">
    <property type="entry name" value="Zn-binding ribosomal proteins"/>
    <property type="match status" value="1"/>
</dbReference>
<protein>
    <recommendedName>
        <fullName evidence="1">Large ribosomal subunit protein bL33</fullName>
    </recommendedName>
    <alternativeName>
        <fullName evidence="2">50S ribosomal protein L33</fullName>
    </alternativeName>
</protein>